<organism>
    <name type="scientific">Maridesulfovibrio salexigens (strain ATCC 14822 / DSM 2638 / NCIMB 8403 / VKM B-1763)</name>
    <name type="common">Desulfovibrio salexigens</name>
    <dbReference type="NCBI Taxonomy" id="526222"/>
    <lineage>
        <taxon>Bacteria</taxon>
        <taxon>Pseudomonadati</taxon>
        <taxon>Thermodesulfobacteriota</taxon>
        <taxon>Desulfovibrionia</taxon>
        <taxon>Desulfovibrionales</taxon>
        <taxon>Desulfovibrionaceae</taxon>
        <taxon>Maridesulfovibrio</taxon>
    </lineage>
</organism>
<reference key="1">
    <citation type="submission" date="2009-06" db="EMBL/GenBank/DDBJ databases">
        <title>Complete sequence of Desulfovibrio salexigens DSM 2638.</title>
        <authorList>
            <consortium name="US DOE Joint Genome Institute"/>
            <person name="Lucas S."/>
            <person name="Copeland A."/>
            <person name="Lapidus A."/>
            <person name="Glavina del Rio T."/>
            <person name="Tice H."/>
            <person name="Bruce D."/>
            <person name="Goodwin L."/>
            <person name="Pitluck S."/>
            <person name="Munk A.C."/>
            <person name="Brettin T."/>
            <person name="Detter J.C."/>
            <person name="Han C."/>
            <person name="Tapia R."/>
            <person name="Larimer F."/>
            <person name="Land M."/>
            <person name="Hauser L."/>
            <person name="Kyrpides N."/>
            <person name="Anderson I."/>
            <person name="Wall J.D."/>
            <person name="Arkin A.P."/>
            <person name="Dehal P."/>
            <person name="Chivian D."/>
            <person name="Giles B."/>
            <person name="Hazen T.C."/>
        </authorList>
    </citation>
    <scope>NUCLEOTIDE SEQUENCE [LARGE SCALE GENOMIC DNA]</scope>
    <source>
        <strain>ATCC 14822 / DSM 2638 / NCIMB 8403 / VKM B-1763</strain>
    </source>
</reference>
<name>HEM1_MARSD</name>
<keyword id="KW-0521">NADP</keyword>
<keyword id="KW-0560">Oxidoreductase</keyword>
<keyword id="KW-0627">Porphyrin biosynthesis</keyword>
<keyword id="KW-1185">Reference proteome</keyword>
<feature type="chain" id="PRO_1000202631" description="Glutamyl-tRNA reductase">
    <location>
        <begin position="1"/>
        <end position="439"/>
    </location>
</feature>
<feature type="active site" description="Nucleophile" evidence="1">
    <location>
        <position position="49"/>
    </location>
</feature>
<feature type="binding site" evidence="1">
    <location>
        <begin position="48"/>
        <end position="51"/>
    </location>
    <ligand>
        <name>substrate</name>
    </ligand>
</feature>
<feature type="binding site" evidence="1">
    <location>
        <position position="107"/>
    </location>
    <ligand>
        <name>substrate</name>
    </ligand>
</feature>
<feature type="binding site" evidence="1">
    <location>
        <begin position="112"/>
        <end position="114"/>
    </location>
    <ligand>
        <name>substrate</name>
    </ligand>
</feature>
<feature type="binding site" evidence="1">
    <location>
        <position position="118"/>
    </location>
    <ligand>
        <name>substrate</name>
    </ligand>
</feature>
<feature type="binding site" evidence="1">
    <location>
        <begin position="187"/>
        <end position="192"/>
    </location>
    <ligand>
        <name>NADP(+)</name>
        <dbReference type="ChEBI" id="CHEBI:58349"/>
    </ligand>
</feature>
<feature type="site" description="Important for activity" evidence="1">
    <location>
        <position position="97"/>
    </location>
</feature>
<proteinExistence type="inferred from homology"/>
<dbReference type="EC" id="1.2.1.70" evidence="1"/>
<dbReference type="EMBL" id="CP001649">
    <property type="protein sequence ID" value="ACS80030.1"/>
    <property type="molecule type" value="Genomic_DNA"/>
</dbReference>
<dbReference type="RefSeq" id="WP_015851846.1">
    <property type="nucleotide sequence ID" value="NC_012881.1"/>
</dbReference>
<dbReference type="SMR" id="C6BV55"/>
<dbReference type="STRING" id="526222.Desal_1970"/>
<dbReference type="KEGG" id="dsa:Desal_1970"/>
<dbReference type="eggNOG" id="COG0373">
    <property type="taxonomic scope" value="Bacteria"/>
</dbReference>
<dbReference type="HOGENOM" id="CLU_035113_2_2_7"/>
<dbReference type="OrthoDB" id="110209at2"/>
<dbReference type="UniPathway" id="UPA00251">
    <property type="reaction ID" value="UER00316"/>
</dbReference>
<dbReference type="Proteomes" id="UP000002601">
    <property type="component" value="Chromosome"/>
</dbReference>
<dbReference type="GO" id="GO:0008883">
    <property type="term" value="F:glutamyl-tRNA reductase activity"/>
    <property type="evidence" value="ECO:0007669"/>
    <property type="project" value="UniProtKB-UniRule"/>
</dbReference>
<dbReference type="GO" id="GO:0050661">
    <property type="term" value="F:NADP binding"/>
    <property type="evidence" value="ECO:0007669"/>
    <property type="project" value="InterPro"/>
</dbReference>
<dbReference type="GO" id="GO:0019353">
    <property type="term" value="P:protoporphyrinogen IX biosynthetic process from glutamate"/>
    <property type="evidence" value="ECO:0007669"/>
    <property type="project" value="TreeGrafter"/>
</dbReference>
<dbReference type="CDD" id="cd05213">
    <property type="entry name" value="NAD_bind_Glutamyl_tRNA_reduct"/>
    <property type="match status" value="1"/>
</dbReference>
<dbReference type="FunFam" id="3.30.460.30:FF:000001">
    <property type="entry name" value="Glutamyl-tRNA reductase"/>
    <property type="match status" value="1"/>
</dbReference>
<dbReference type="FunFam" id="3.40.50.720:FF:000031">
    <property type="entry name" value="Glutamyl-tRNA reductase"/>
    <property type="match status" value="1"/>
</dbReference>
<dbReference type="Gene3D" id="3.30.460.30">
    <property type="entry name" value="Glutamyl-tRNA reductase, N-terminal domain"/>
    <property type="match status" value="1"/>
</dbReference>
<dbReference type="Gene3D" id="3.40.50.720">
    <property type="entry name" value="NAD(P)-binding Rossmann-like Domain"/>
    <property type="match status" value="1"/>
</dbReference>
<dbReference type="HAMAP" id="MF_00087">
    <property type="entry name" value="Glu_tRNA_reductase"/>
    <property type="match status" value="1"/>
</dbReference>
<dbReference type="InterPro" id="IPR000343">
    <property type="entry name" value="4pyrrol_synth_GluRdtase"/>
</dbReference>
<dbReference type="InterPro" id="IPR015896">
    <property type="entry name" value="4pyrrol_synth_GluRdtase_dimer"/>
</dbReference>
<dbReference type="InterPro" id="IPR015895">
    <property type="entry name" value="4pyrrol_synth_GluRdtase_N"/>
</dbReference>
<dbReference type="InterPro" id="IPR018214">
    <property type="entry name" value="GluRdtase_CS"/>
</dbReference>
<dbReference type="InterPro" id="IPR036453">
    <property type="entry name" value="GluRdtase_dimer_dom_sf"/>
</dbReference>
<dbReference type="InterPro" id="IPR036343">
    <property type="entry name" value="GluRdtase_N_sf"/>
</dbReference>
<dbReference type="InterPro" id="IPR036291">
    <property type="entry name" value="NAD(P)-bd_dom_sf"/>
</dbReference>
<dbReference type="InterPro" id="IPR006151">
    <property type="entry name" value="Shikm_DH/Glu-tRNA_Rdtase"/>
</dbReference>
<dbReference type="NCBIfam" id="TIGR01035">
    <property type="entry name" value="hemA"/>
    <property type="match status" value="1"/>
</dbReference>
<dbReference type="PANTHER" id="PTHR43013">
    <property type="entry name" value="GLUTAMYL-TRNA REDUCTASE"/>
    <property type="match status" value="1"/>
</dbReference>
<dbReference type="PANTHER" id="PTHR43013:SF1">
    <property type="entry name" value="GLUTAMYL-TRNA REDUCTASE"/>
    <property type="match status" value="1"/>
</dbReference>
<dbReference type="Pfam" id="PF00745">
    <property type="entry name" value="GlutR_dimer"/>
    <property type="match status" value="1"/>
</dbReference>
<dbReference type="Pfam" id="PF05201">
    <property type="entry name" value="GlutR_N"/>
    <property type="match status" value="1"/>
</dbReference>
<dbReference type="Pfam" id="PF01488">
    <property type="entry name" value="Shikimate_DH"/>
    <property type="match status" value="1"/>
</dbReference>
<dbReference type="PIRSF" id="PIRSF000445">
    <property type="entry name" value="4pyrrol_synth_GluRdtase"/>
    <property type="match status" value="1"/>
</dbReference>
<dbReference type="SUPFAM" id="SSF69742">
    <property type="entry name" value="Glutamyl tRNA-reductase catalytic, N-terminal domain"/>
    <property type="match status" value="1"/>
</dbReference>
<dbReference type="SUPFAM" id="SSF69075">
    <property type="entry name" value="Glutamyl tRNA-reductase dimerization domain"/>
    <property type="match status" value="1"/>
</dbReference>
<dbReference type="SUPFAM" id="SSF51735">
    <property type="entry name" value="NAD(P)-binding Rossmann-fold domains"/>
    <property type="match status" value="1"/>
</dbReference>
<dbReference type="PROSITE" id="PS00747">
    <property type="entry name" value="GLUTR"/>
    <property type="match status" value="1"/>
</dbReference>
<evidence type="ECO:0000255" key="1">
    <source>
        <dbReference type="HAMAP-Rule" id="MF_00087"/>
    </source>
</evidence>
<comment type="function">
    <text evidence="1">Catalyzes the NADPH-dependent reduction of glutamyl-tRNA(Glu) to glutamate 1-semialdehyde (GSA).</text>
</comment>
<comment type="catalytic activity">
    <reaction evidence="1">
        <text>(S)-4-amino-5-oxopentanoate + tRNA(Glu) + NADP(+) = L-glutamyl-tRNA(Glu) + NADPH + H(+)</text>
        <dbReference type="Rhea" id="RHEA:12344"/>
        <dbReference type="Rhea" id="RHEA-COMP:9663"/>
        <dbReference type="Rhea" id="RHEA-COMP:9680"/>
        <dbReference type="ChEBI" id="CHEBI:15378"/>
        <dbReference type="ChEBI" id="CHEBI:57501"/>
        <dbReference type="ChEBI" id="CHEBI:57783"/>
        <dbReference type="ChEBI" id="CHEBI:58349"/>
        <dbReference type="ChEBI" id="CHEBI:78442"/>
        <dbReference type="ChEBI" id="CHEBI:78520"/>
        <dbReference type="EC" id="1.2.1.70"/>
    </reaction>
</comment>
<comment type="pathway">
    <text evidence="1">Porphyrin-containing compound metabolism; protoporphyrin-IX biosynthesis; 5-aminolevulinate from L-glutamyl-tRNA(Glu): step 1/2.</text>
</comment>
<comment type="subunit">
    <text evidence="1">Homodimer.</text>
</comment>
<comment type="domain">
    <text evidence="1">Possesses an unusual extended V-shaped dimeric structure with each monomer consisting of three distinct domains arranged along a curved 'spinal' alpha-helix. The N-terminal catalytic domain specifically recognizes the glutamate moiety of the substrate. The second domain is the NADPH-binding domain, and the third C-terminal domain is responsible for dimerization.</text>
</comment>
<comment type="miscellaneous">
    <text evidence="1">During catalysis, the active site Cys acts as a nucleophile attacking the alpha-carbonyl group of tRNA-bound glutamate with the formation of a thioester intermediate between enzyme and glutamate, and the concomitant release of tRNA(Glu). The thioester intermediate is finally reduced by direct hydride transfer from NADPH, to form the product GSA.</text>
</comment>
<comment type="similarity">
    <text evidence="1">Belongs to the glutamyl-tRNA reductase family.</text>
</comment>
<gene>
    <name evidence="1" type="primary">hemA</name>
    <name type="ordered locus">Desal_1970</name>
</gene>
<sequence length="439" mass="49019">MDHNIYLIGLNHRSAGVDVRERYALTNVEEFESGLLELGVREVMALSTCNRVEILVVCAPEITQPNILEYWAKRCCGSVSELEPNTYCHDGLNAVKHLFRVACSLDSMIVGEPQILGQLKDSYRKAVEAGAARVIINRMLHKSFFVAKRVRTETSIASSAVSISYAAVELAKKIFGELEGQRAMLIGAGEMAELAATHLLNSGVEQISIANRTYSRAEDLAKCMGGSAVSFDNLYDHLVETDIIISSTGAPHAVISAKEMKKVIKKRKYRPMFFIDIAVPRDIDPDVNGLDNVYLYDIDDLKDVVEENKSQREDEAIKANSIVEFETLSFGNWINSLDLQPTIVDLFNRSENVAQQELAKTLKRLGDVDAKTHKALETMAMSIGKKLLHEPVAFLKRRTEEEGKADEFVDLARRMFNLDNETIPADAHCGRKKNRNPEN</sequence>
<accession>C6BV55</accession>
<protein>
    <recommendedName>
        <fullName evidence="1">Glutamyl-tRNA reductase</fullName>
        <shortName evidence="1">GluTR</shortName>
        <ecNumber evidence="1">1.2.1.70</ecNumber>
    </recommendedName>
</protein>